<keyword id="KW-0560">Oxidoreductase</keyword>
<keyword id="KW-1185">Reference proteome</keyword>
<keyword id="KW-0819">tRNA processing</keyword>
<reference key="1">
    <citation type="journal article" date="2010" name="Appl. Environ. Microbiol.">
        <title>The genome sequence of Psychrobacter arcticus 273-4, a psychroactive Siberian permafrost bacterium, reveals mechanisms for adaptation to low-temperature growth.</title>
        <authorList>
            <person name="Ayala-del-Rio H.L."/>
            <person name="Chain P.S."/>
            <person name="Grzymski J.J."/>
            <person name="Ponder M.A."/>
            <person name="Ivanova N."/>
            <person name="Bergholz P.W."/>
            <person name="Di Bartolo G."/>
            <person name="Hauser L."/>
            <person name="Land M."/>
            <person name="Bakermans C."/>
            <person name="Rodrigues D."/>
            <person name="Klappenbach J."/>
            <person name="Zarka D."/>
            <person name="Larimer F."/>
            <person name="Richardson P."/>
            <person name="Murray A."/>
            <person name="Thomashow M."/>
            <person name="Tiedje J.M."/>
        </authorList>
    </citation>
    <scope>NUCLEOTIDE SEQUENCE [LARGE SCALE GENOMIC DNA]</scope>
    <source>
        <strain>DSM 17307 / VKM B-2377 / 273-4</strain>
    </source>
</reference>
<comment type="function">
    <text evidence="1">Catalyzes oxygen-dependent 5-hydroxyuridine (ho5U) modification at position 34 in tRNAs.</text>
</comment>
<comment type="catalytic activity">
    <reaction evidence="1">
        <text>uridine(34) in tRNA + AH2 + O2 = 5-hydroxyuridine(34) in tRNA + A + H2O</text>
        <dbReference type="Rhea" id="RHEA:64224"/>
        <dbReference type="Rhea" id="RHEA-COMP:11727"/>
        <dbReference type="Rhea" id="RHEA-COMP:13381"/>
        <dbReference type="ChEBI" id="CHEBI:13193"/>
        <dbReference type="ChEBI" id="CHEBI:15377"/>
        <dbReference type="ChEBI" id="CHEBI:15379"/>
        <dbReference type="ChEBI" id="CHEBI:17499"/>
        <dbReference type="ChEBI" id="CHEBI:65315"/>
        <dbReference type="ChEBI" id="CHEBI:136877"/>
    </reaction>
</comment>
<comment type="similarity">
    <text evidence="1">Belongs to the TrhO family.</text>
</comment>
<comment type="sequence caution" evidence="2">
    <conflict type="erroneous initiation">
        <sequence resource="EMBL-CDS" id="AAZ18239"/>
    </conflict>
</comment>
<accession>Q4FUR9</accession>
<sequence length="352" mass="39960">MSTSETNNIKAPNHVTEYDSVTNNIVVAALYKFTRFADFEEYREPILNIMLDNEVKGTLLIASEGINGTISGTRQGIDNVLEYLRSIDAIGSFTFKESYTDAQPFYRTKVKLKKEIVTMGVENIDPLQSVGRYVKPSDWNALISDPDVILIDTRNDYEVKIGTFQNAVNPNTETFREFPEYVAKELDPAKHKKVAMFCTGGIRCEKSTAFMREQGFEEVYHLEGGILKYLEEVPASDSMWEGDCFVFDNRVSVNHNLEKGSYEQCFACRMPITQAEMQSPAYIKGESCPHCIDKATDEQKARFREREHQMQLAQKRGEAHIGSDVIDVIEKRKAAKIEARRQADEANKAKAD</sequence>
<name>TRHO_PSYA2</name>
<protein>
    <recommendedName>
        <fullName evidence="1">tRNA uridine(34) hydroxylase</fullName>
        <ecNumber evidence="1">1.14.-.-</ecNumber>
    </recommendedName>
    <alternativeName>
        <fullName evidence="1">tRNA hydroxylation protein O</fullName>
    </alternativeName>
</protein>
<dbReference type="EC" id="1.14.-.-" evidence="1"/>
<dbReference type="EMBL" id="CP000082">
    <property type="protein sequence ID" value="AAZ18239.1"/>
    <property type="status" value="ALT_INIT"/>
    <property type="molecule type" value="Genomic_DNA"/>
</dbReference>
<dbReference type="RefSeq" id="WP_011279677.1">
    <property type="nucleotide sequence ID" value="NC_007204.1"/>
</dbReference>
<dbReference type="SMR" id="Q4FUR9"/>
<dbReference type="STRING" id="259536.Psyc_0370"/>
<dbReference type="KEGG" id="par:Psyc_0370"/>
<dbReference type="eggNOG" id="COG1054">
    <property type="taxonomic scope" value="Bacteria"/>
</dbReference>
<dbReference type="HOGENOM" id="CLU_038878_0_0_6"/>
<dbReference type="Proteomes" id="UP000000546">
    <property type="component" value="Chromosome"/>
</dbReference>
<dbReference type="GO" id="GO:0016705">
    <property type="term" value="F:oxidoreductase activity, acting on paired donors, with incorporation or reduction of molecular oxygen"/>
    <property type="evidence" value="ECO:0007669"/>
    <property type="project" value="UniProtKB-UniRule"/>
</dbReference>
<dbReference type="GO" id="GO:0006400">
    <property type="term" value="P:tRNA modification"/>
    <property type="evidence" value="ECO:0007669"/>
    <property type="project" value="UniProtKB-UniRule"/>
</dbReference>
<dbReference type="CDD" id="cd01518">
    <property type="entry name" value="RHOD_YceA"/>
    <property type="match status" value="1"/>
</dbReference>
<dbReference type="Gene3D" id="3.30.70.100">
    <property type="match status" value="1"/>
</dbReference>
<dbReference type="Gene3D" id="3.40.250.10">
    <property type="entry name" value="Rhodanese-like domain"/>
    <property type="match status" value="1"/>
</dbReference>
<dbReference type="HAMAP" id="MF_00469">
    <property type="entry name" value="TrhO"/>
    <property type="match status" value="1"/>
</dbReference>
<dbReference type="InterPro" id="IPR001763">
    <property type="entry name" value="Rhodanese-like_dom"/>
</dbReference>
<dbReference type="InterPro" id="IPR036873">
    <property type="entry name" value="Rhodanese-like_dom_sf"/>
</dbReference>
<dbReference type="InterPro" id="IPR020936">
    <property type="entry name" value="TrhO"/>
</dbReference>
<dbReference type="InterPro" id="IPR040503">
    <property type="entry name" value="TRHO_N"/>
</dbReference>
<dbReference type="NCBIfam" id="NF001136">
    <property type="entry name" value="PRK00142.1-4"/>
    <property type="match status" value="1"/>
</dbReference>
<dbReference type="PANTHER" id="PTHR43268:SF3">
    <property type="entry name" value="RHODANESE-LIKE DOMAIN-CONTAINING PROTEIN 7-RELATED"/>
    <property type="match status" value="1"/>
</dbReference>
<dbReference type="PANTHER" id="PTHR43268">
    <property type="entry name" value="THIOSULFATE SULFURTRANSFERASE/RHODANESE-LIKE DOMAIN-CONTAINING PROTEIN 2"/>
    <property type="match status" value="1"/>
</dbReference>
<dbReference type="Pfam" id="PF00581">
    <property type="entry name" value="Rhodanese"/>
    <property type="match status" value="1"/>
</dbReference>
<dbReference type="Pfam" id="PF17773">
    <property type="entry name" value="UPF0176_N"/>
    <property type="match status" value="1"/>
</dbReference>
<dbReference type="SMART" id="SM00450">
    <property type="entry name" value="RHOD"/>
    <property type="match status" value="1"/>
</dbReference>
<dbReference type="SUPFAM" id="SSF52821">
    <property type="entry name" value="Rhodanese/Cell cycle control phosphatase"/>
    <property type="match status" value="1"/>
</dbReference>
<dbReference type="PROSITE" id="PS50206">
    <property type="entry name" value="RHODANESE_3"/>
    <property type="match status" value="1"/>
</dbReference>
<gene>
    <name evidence="1" type="primary">trhO</name>
    <name type="ordered locus">Psyc_0370</name>
</gene>
<proteinExistence type="inferred from homology"/>
<feature type="chain" id="PRO_0000242935" description="tRNA uridine(34) hydroxylase">
    <location>
        <begin position="1"/>
        <end position="352"/>
    </location>
</feature>
<feature type="domain" description="Rhodanese" evidence="1">
    <location>
        <begin position="144"/>
        <end position="238"/>
    </location>
</feature>
<feature type="active site" description="Cysteine persulfide intermediate" evidence="1">
    <location>
        <position position="198"/>
    </location>
</feature>
<evidence type="ECO:0000255" key="1">
    <source>
        <dbReference type="HAMAP-Rule" id="MF_00469"/>
    </source>
</evidence>
<evidence type="ECO:0000305" key="2"/>
<organism>
    <name type="scientific">Psychrobacter arcticus (strain DSM 17307 / VKM B-2377 / 273-4)</name>
    <dbReference type="NCBI Taxonomy" id="259536"/>
    <lineage>
        <taxon>Bacteria</taxon>
        <taxon>Pseudomonadati</taxon>
        <taxon>Pseudomonadota</taxon>
        <taxon>Gammaproteobacteria</taxon>
        <taxon>Moraxellales</taxon>
        <taxon>Moraxellaceae</taxon>
        <taxon>Psychrobacter</taxon>
    </lineage>
</organism>